<sequence length="88" mass="10196">MALLDFFLSRKKNTASIAKERLQIIVAERRRSDAEPHYLPQLKRDILEVICKYVQIDPEMVTVQLEQKGDDISILELNVTLPEAEETK</sequence>
<organism>
    <name type="scientific">Cronobacter sakazakii (strain ATCC BAA-894)</name>
    <name type="common">Enterobacter sakazakii</name>
    <dbReference type="NCBI Taxonomy" id="290339"/>
    <lineage>
        <taxon>Bacteria</taxon>
        <taxon>Pseudomonadati</taxon>
        <taxon>Pseudomonadota</taxon>
        <taxon>Gammaproteobacteria</taxon>
        <taxon>Enterobacterales</taxon>
        <taxon>Enterobacteriaceae</taxon>
        <taxon>Cronobacter</taxon>
    </lineage>
</organism>
<keyword id="KW-0131">Cell cycle</keyword>
<keyword id="KW-0132">Cell division</keyword>
<keyword id="KW-1185">Reference proteome</keyword>
<evidence type="ECO:0000255" key="1">
    <source>
        <dbReference type="HAMAP-Rule" id="MF_00262"/>
    </source>
</evidence>
<feature type="chain" id="PRO_1000047783" description="Cell division topological specificity factor">
    <location>
        <begin position="1"/>
        <end position="88"/>
    </location>
</feature>
<name>MINE_CROS8</name>
<dbReference type="EMBL" id="CP000783">
    <property type="protein sequence ID" value="ABU76715.1"/>
    <property type="molecule type" value="Genomic_DNA"/>
</dbReference>
<dbReference type="RefSeq" id="WP_004384978.1">
    <property type="nucleotide sequence ID" value="NC_009778.1"/>
</dbReference>
<dbReference type="SMR" id="A7MKE3"/>
<dbReference type="GeneID" id="92212755"/>
<dbReference type="KEGG" id="esa:ESA_01457"/>
<dbReference type="HOGENOM" id="CLU_137929_2_2_6"/>
<dbReference type="Proteomes" id="UP000000260">
    <property type="component" value="Chromosome"/>
</dbReference>
<dbReference type="GO" id="GO:0051301">
    <property type="term" value="P:cell division"/>
    <property type="evidence" value="ECO:0007669"/>
    <property type="project" value="UniProtKB-KW"/>
</dbReference>
<dbReference type="GO" id="GO:0032955">
    <property type="term" value="P:regulation of division septum assembly"/>
    <property type="evidence" value="ECO:0007669"/>
    <property type="project" value="InterPro"/>
</dbReference>
<dbReference type="FunFam" id="3.30.1070.10:FF:000001">
    <property type="entry name" value="Cell division topological specificity factor"/>
    <property type="match status" value="1"/>
</dbReference>
<dbReference type="Gene3D" id="3.30.1070.10">
    <property type="entry name" value="Cell division topological specificity factor MinE"/>
    <property type="match status" value="1"/>
</dbReference>
<dbReference type="HAMAP" id="MF_00262">
    <property type="entry name" value="MinE"/>
    <property type="match status" value="1"/>
</dbReference>
<dbReference type="InterPro" id="IPR005527">
    <property type="entry name" value="MinE"/>
</dbReference>
<dbReference type="InterPro" id="IPR036707">
    <property type="entry name" value="MinE_sf"/>
</dbReference>
<dbReference type="NCBIfam" id="TIGR01215">
    <property type="entry name" value="minE"/>
    <property type="match status" value="1"/>
</dbReference>
<dbReference type="NCBIfam" id="NF001422">
    <property type="entry name" value="PRK00296.1"/>
    <property type="match status" value="1"/>
</dbReference>
<dbReference type="Pfam" id="PF03776">
    <property type="entry name" value="MinE"/>
    <property type="match status" value="1"/>
</dbReference>
<dbReference type="SUPFAM" id="SSF55229">
    <property type="entry name" value="Cell division protein MinE topological specificity domain"/>
    <property type="match status" value="1"/>
</dbReference>
<reference key="1">
    <citation type="journal article" date="2010" name="PLoS ONE">
        <title>Genome sequence of Cronobacter sakazakii BAA-894 and comparative genomic hybridization analysis with other Cronobacter species.</title>
        <authorList>
            <person name="Kucerova E."/>
            <person name="Clifton S.W."/>
            <person name="Xia X.Q."/>
            <person name="Long F."/>
            <person name="Porwollik S."/>
            <person name="Fulton L."/>
            <person name="Fronick C."/>
            <person name="Minx P."/>
            <person name="Kyung K."/>
            <person name="Warren W."/>
            <person name="Fulton R."/>
            <person name="Feng D."/>
            <person name="Wollam A."/>
            <person name="Shah N."/>
            <person name="Bhonagiri V."/>
            <person name="Nash W.E."/>
            <person name="Hallsworth-Pepin K."/>
            <person name="Wilson R.K."/>
            <person name="McClelland M."/>
            <person name="Forsythe S.J."/>
        </authorList>
    </citation>
    <scope>NUCLEOTIDE SEQUENCE [LARGE SCALE GENOMIC DNA]</scope>
    <source>
        <strain>ATCC BAA-894</strain>
    </source>
</reference>
<protein>
    <recommendedName>
        <fullName evidence="1">Cell division topological specificity factor</fullName>
    </recommendedName>
</protein>
<comment type="function">
    <text evidence="1">Prevents the cell division inhibition by proteins MinC and MinD at internal division sites while permitting inhibition at polar sites. This ensures cell division at the proper site by restricting the formation of a division septum at the midpoint of the long axis of the cell.</text>
</comment>
<comment type="similarity">
    <text evidence="1">Belongs to the MinE family.</text>
</comment>
<gene>
    <name evidence="1" type="primary">minE</name>
    <name type="ordered locus">ESA_01457</name>
</gene>
<accession>A7MKE3</accession>
<proteinExistence type="inferred from homology"/>